<gene>
    <name evidence="1" type="primary">dapF</name>
    <name type="ordered locus">Mkms_2209</name>
</gene>
<accession>A1UEZ9</accession>
<feature type="chain" id="PRO_1000011911" description="Diaminopimelate epimerase">
    <location>
        <begin position="1"/>
        <end position="293"/>
    </location>
</feature>
<feature type="active site" description="Proton donor" evidence="1">
    <location>
        <position position="87"/>
    </location>
</feature>
<feature type="active site" description="Proton acceptor" evidence="1">
    <location>
        <position position="229"/>
    </location>
</feature>
<feature type="binding site" evidence="1">
    <location>
        <position position="11"/>
    </location>
    <ligand>
        <name>substrate</name>
    </ligand>
</feature>
<feature type="binding site" evidence="1">
    <location>
        <position position="78"/>
    </location>
    <ligand>
        <name>substrate</name>
    </ligand>
</feature>
<feature type="binding site" evidence="1">
    <location>
        <begin position="88"/>
        <end position="89"/>
    </location>
    <ligand>
        <name>substrate</name>
    </ligand>
</feature>
<feature type="binding site" evidence="1">
    <location>
        <position position="166"/>
    </location>
    <ligand>
        <name>substrate</name>
    </ligand>
</feature>
<feature type="binding site" evidence="1">
    <location>
        <position position="202"/>
    </location>
    <ligand>
        <name>substrate</name>
    </ligand>
</feature>
<feature type="binding site" evidence="1">
    <location>
        <begin position="220"/>
        <end position="221"/>
    </location>
    <ligand>
        <name>substrate</name>
    </ligand>
</feature>
<feature type="binding site" evidence="1">
    <location>
        <begin position="230"/>
        <end position="231"/>
    </location>
    <ligand>
        <name>substrate</name>
    </ligand>
</feature>
<feature type="site" description="Could be important to modulate the pK values of the two catalytic cysteine residues" evidence="1">
    <location>
        <position position="168"/>
    </location>
</feature>
<feature type="site" description="Could be important to modulate the pK values of the two catalytic cysteine residues" evidence="1">
    <location>
        <position position="220"/>
    </location>
</feature>
<sequence>MQFAKGHGTQNDFVLLPDLDARLALTPAVVSALCDRRRGLGADGVLRVTTAKAALSAGVFERLPEGVGAGDWYMDYRNADGSIAQMCGNGVRVFAHYLRAADLESRDEFVVGSLAGPRPVVLHGFDLAHRSRAEVTVEMGKVNLLGSGSAVVGGRRFTGLGIDVGNPHLACVDTTLTEAELAALDVAAPVDFDPAQFPDGVNVEVLTALRDGAVSMRVHERGVGETRSCGTGTVAAAVAALAQEGAAVGTLDVRIPGGVVTVSVTDTTSFLRGPSELVATGELAGEWWQSHQR</sequence>
<reference key="1">
    <citation type="submission" date="2006-12" db="EMBL/GenBank/DDBJ databases">
        <title>Complete sequence of chromosome of Mycobacterium sp. KMS.</title>
        <authorList>
            <consortium name="US DOE Joint Genome Institute"/>
            <person name="Copeland A."/>
            <person name="Lucas S."/>
            <person name="Lapidus A."/>
            <person name="Barry K."/>
            <person name="Detter J.C."/>
            <person name="Glavina del Rio T."/>
            <person name="Hammon N."/>
            <person name="Israni S."/>
            <person name="Dalin E."/>
            <person name="Tice H."/>
            <person name="Pitluck S."/>
            <person name="Kiss H."/>
            <person name="Brettin T."/>
            <person name="Bruce D."/>
            <person name="Han C."/>
            <person name="Tapia R."/>
            <person name="Gilna P."/>
            <person name="Schmutz J."/>
            <person name="Larimer F."/>
            <person name="Land M."/>
            <person name="Hauser L."/>
            <person name="Kyrpides N."/>
            <person name="Mikhailova N."/>
            <person name="Miller C.D."/>
            <person name="Richardson P."/>
        </authorList>
    </citation>
    <scope>NUCLEOTIDE SEQUENCE [LARGE SCALE GENOMIC DNA]</scope>
    <source>
        <strain>KMS</strain>
    </source>
</reference>
<organism>
    <name type="scientific">Mycobacterium sp. (strain KMS)</name>
    <dbReference type="NCBI Taxonomy" id="189918"/>
    <lineage>
        <taxon>Bacteria</taxon>
        <taxon>Bacillati</taxon>
        <taxon>Actinomycetota</taxon>
        <taxon>Actinomycetes</taxon>
        <taxon>Mycobacteriales</taxon>
        <taxon>Mycobacteriaceae</taxon>
        <taxon>Mycobacterium</taxon>
    </lineage>
</organism>
<name>DAPF_MYCSK</name>
<comment type="function">
    <text evidence="1">Catalyzes the stereoinversion of LL-2,6-diaminopimelate (L,L-DAP) to meso-diaminopimelate (meso-DAP), a precursor of L-lysine and an essential component of the bacterial peptidoglycan.</text>
</comment>
<comment type="catalytic activity">
    <reaction evidence="1">
        <text>(2S,6S)-2,6-diaminopimelate = meso-2,6-diaminopimelate</text>
        <dbReference type="Rhea" id="RHEA:15393"/>
        <dbReference type="ChEBI" id="CHEBI:57609"/>
        <dbReference type="ChEBI" id="CHEBI:57791"/>
        <dbReference type="EC" id="5.1.1.7"/>
    </reaction>
</comment>
<comment type="pathway">
    <text evidence="1">Amino-acid biosynthesis; L-lysine biosynthesis via DAP pathway; DL-2,6-diaminopimelate from LL-2,6-diaminopimelate: step 1/1.</text>
</comment>
<comment type="subunit">
    <text evidence="1">Homodimer.</text>
</comment>
<comment type="subcellular location">
    <subcellularLocation>
        <location evidence="1">Cytoplasm</location>
    </subcellularLocation>
</comment>
<comment type="similarity">
    <text evidence="1">Belongs to the diaminopimelate epimerase family.</text>
</comment>
<dbReference type="EC" id="5.1.1.7" evidence="1"/>
<dbReference type="EMBL" id="CP000518">
    <property type="protein sequence ID" value="ABL91407.1"/>
    <property type="molecule type" value="Genomic_DNA"/>
</dbReference>
<dbReference type="SMR" id="A1UEZ9"/>
<dbReference type="STRING" id="189918.Mkms_2209"/>
<dbReference type="KEGG" id="mkm:Mkms_2209"/>
<dbReference type="HOGENOM" id="CLU_053306_4_0_11"/>
<dbReference type="OrthoDB" id="9805408at2"/>
<dbReference type="UniPathway" id="UPA00034">
    <property type="reaction ID" value="UER00025"/>
</dbReference>
<dbReference type="GO" id="GO:0005829">
    <property type="term" value="C:cytosol"/>
    <property type="evidence" value="ECO:0007669"/>
    <property type="project" value="TreeGrafter"/>
</dbReference>
<dbReference type="GO" id="GO:0008837">
    <property type="term" value="F:diaminopimelate epimerase activity"/>
    <property type="evidence" value="ECO:0007669"/>
    <property type="project" value="UniProtKB-UniRule"/>
</dbReference>
<dbReference type="GO" id="GO:0009089">
    <property type="term" value="P:lysine biosynthetic process via diaminopimelate"/>
    <property type="evidence" value="ECO:0007669"/>
    <property type="project" value="UniProtKB-UniRule"/>
</dbReference>
<dbReference type="Gene3D" id="3.10.310.10">
    <property type="entry name" value="Diaminopimelate Epimerase, Chain A, domain 1"/>
    <property type="match status" value="2"/>
</dbReference>
<dbReference type="HAMAP" id="MF_00197">
    <property type="entry name" value="DAP_epimerase"/>
    <property type="match status" value="1"/>
</dbReference>
<dbReference type="InterPro" id="IPR018510">
    <property type="entry name" value="DAP_epimerase_AS"/>
</dbReference>
<dbReference type="InterPro" id="IPR001653">
    <property type="entry name" value="DAP_epimerase_DapF"/>
</dbReference>
<dbReference type="NCBIfam" id="TIGR00652">
    <property type="entry name" value="DapF"/>
    <property type="match status" value="1"/>
</dbReference>
<dbReference type="PANTHER" id="PTHR31689:SF0">
    <property type="entry name" value="DIAMINOPIMELATE EPIMERASE"/>
    <property type="match status" value="1"/>
</dbReference>
<dbReference type="PANTHER" id="PTHR31689">
    <property type="entry name" value="DIAMINOPIMELATE EPIMERASE, CHLOROPLASTIC"/>
    <property type="match status" value="1"/>
</dbReference>
<dbReference type="Pfam" id="PF01678">
    <property type="entry name" value="DAP_epimerase"/>
    <property type="match status" value="2"/>
</dbReference>
<dbReference type="SUPFAM" id="SSF54506">
    <property type="entry name" value="Diaminopimelate epimerase-like"/>
    <property type="match status" value="2"/>
</dbReference>
<dbReference type="PROSITE" id="PS01326">
    <property type="entry name" value="DAP_EPIMERASE"/>
    <property type="match status" value="1"/>
</dbReference>
<evidence type="ECO:0000255" key="1">
    <source>
        <dbReference type="HAMAP-Rule" id="MF_00197"/>
    </source>
</evidence>
<proteinExistence type="inferred from homology"/>
<keyword id="KW-0028">Amino-acid biosynthesis</keyword>
<keyword id="KW-0963">Cytoplasm</keyword>
<keyword id="KW-0413">Isomerase</keyword>
<keyword id="KW-0457">Lysine biosynthesis</keyword>
<protein>
    <recommendedName>
        <fullName evidence="1">Diaminopimelate epimerase</fullName>
        <shortName evidence="1">DAP epimerase</shortName>
        <ecNumber evidence="1">5.1.1.7</ecNumber>
    </recommendedName>
    <alternativeName>
        <fullName evidence="1">PLP-independent amino acid racemase</fullName>
    </alternativeName>
</protein>